<reference key="1">
    <citation type="submission" date="2007-11" db="EMBL/GenBank/DDBJ databases">
        <title>Genome sequencing of phylogenetically and phenotypically diverse Coxiella burnetii isolates.</title>
        <authorList>
            <person name="Seshadri R."/>
            <person name="Samuel J.E."/>
        </authorList>
    </citation>
    <scope>NUCLEOTIDE SEQUENCE [LARGE SCALE GENOMIC DNA]</scope>
    <source>
        <strain>RSA 331 / Henzerling II</strain>
    </source>
</reference>
<accession>A9N9F9</accession>
<gene>
    <name evidence="1" type="primary">hslV</name>
    <name type="ordered locus">COXBURSA331_A0074</name>
</gene>
<sequence>MKQFRGTTILSVRRNGKVVIGGDGQVSMGSTIMKANARKVRRLYNGKVIAGFAGGTADAFTLFERFESKLEKHSGNLTRAAVELAKDWRTDRILRRLEALLTVADSKASLIITGLGDVIEPEQSLMAIGSGGSFAQAAAKALLENTKLSARKIVEKALTIAADICIYTNLNFTIEELDSES</sequence>
<evidence type="ECO:0000255" key="1">
    <source>
        <dbReference type="HAMAP-Rule" id="MF_00248"/>
    </source>
</evidence>
<dbReference type="EC" id="3.4.25.2" evidence="1"/>
<dbReference type="EMBL" id="CP000890">
    <property type="protein sequence ID" value="ABX78637.1"/>
    <property type="molecule type" value="Genomic_DNA"/>
</dbReference>
<dbReference type="RefSeq" id="WP_012220036.1">
    <property type="nucleotide sequence ID" value="NC_010117.1"/>
</dbReference>
<dbReference type="SMR" id="A9N9F9"/>
<dbReference type="MEROPS" id="T01.006"/>
<dbReference type="KEGG" id="cbs:COXBURSA331_A0074"/>
<dbReference type="HOGENOM" id="CLU_093872_1_0_6"/>
<dbReference type="GO" id="GO:0009376">
    <property type="term" value="C:HslUV protease complex"/>
    <property type="evidence" value="ECO:0007669"/>
    <property type="project" value="UniProtKB-UniRule"/>
</dbReference>
<dbReference type="GO" id="GO:0005839">
    <property type="term" value="C:proteasome core complex"/>
    <property type="evidence" value="ECO:0007669"/>
    <property type="project" value="InterPro"/>
</dbReference>
<dbReference type="GO" id="GO:0046872">
    <property type="term" value="F:metal ion binding"/>
    <property type="evidence" value="ECO:0007669"/>
    <property type="project" value="UniProtKB-KW"/>
</dbReference>
<dbReference type="GO" id="GO:0004298">
    <property type="term" value="F:threonine-type endopeptidase activity"/>
    <property type="evidence" value="ECO:0007669"/>
    <property type="project" value="UniProtKB-KW"/>
</dbReference>
<dbReference type="GO" id="GO:0051603">
    <property type="term" value="P:proteolysis involved in protein catabolic process"/>
    <property type="evidence" value="ECO:0007669"/>
    <property type="project" value="InterPro"/>
</dbReference>
<dbReference type="CDD" id="cd01913">
    <property type="entry name" value="protease_HslV"/>
    <property type="match status" value="1"/>
</dbReference>
<dbReference type="FunFam" id="3.60.20.10:FF:000002">
    <property type="entry name" value="ATP-dependent protease subunit HslV"/>
    <property type="match status" value="1"/>
</dbReference>
<dbReference type="Gene3D" id="3.60.20.10">
    <property type="entry name" value="Glutamine Phosphoribosylpyrophosphate, subunit 1, domain 1"/>
    <property type="match status" value="1"/>
</dbReference>
<dbReference type="HAMAP" id="MF_00248">
    <property type="entry name" value="HslV"/>
    <property type="match status" value="1"/>
</dbReference>
<dbReference type="InterPro" id="IPR022281">
    <property type="entry name" value="ATP-dep_Prtase_HsIV_su"/>
</dbReference>
<dbReference type="InterPro" id="IPR029055">
    <property type="entry name" value="Ntn_hydrolases_N"/>
</dbReference>
<dbReference type="InterPro" id="IPR001353">
    <property type="entry name" value="Proteasome_sua/b"/>
</dbReference>
<dbReference type="InterPro" id="IPR023333">
    <property type="entry name" value="Proteasome_suB-type"/>
</dbReference>
<dbReference type="NCBIfam" id="TIGR03692">
    <property type="entry name" value="ATP_dep_HslV"/>
    <property type="match status" value="1"/>
</dbReference>
<dbReference type="NCBIfam" id="NF003964">
    <property type="entry name" value="PRK05456.1"/>
    <property type="match status" value="1"/>
</dbReference>
<dbReference type="PANTHER" id="PTHR32194:SF0">
    <property type="entry name" value="ATP-DEPENDENT PROTEASE SUBUNIT HSLV"/>
    <property type="match status" value="1"/>
</dbReference>
<dbReference type="PANTHER" id="PTHR32194">
    <property type="entry name" value="METALLOPROTEASE TLDD"/>
    <property type="match status" value="1"/>
</dbReference>
<dbReference type="Pfam" id="PF00227">
    <property type="entry name" value="Proteasome"/>
    <property type="match status" value="1"/>
</dbReference>
<dbReference type="PIRSF" id="PIRSF039093">
    <property type="entry name" value="HslV"/>
    <property type="match status" value="1"/>
</dbReference>
<dbReference type="SUPFAM" id="SSF56235">
    <property type="entry name" value="N-terminal nucleophile aminohydrolases (Ntn hydrolases)"/>
    <property type="match status" value="1"/>
</dbReference>
<dbReference type="PROSITE" id="PS51476">
    <property type="entry name" value="PROTEASOME_BETA_2"/>
    <property type="match status" value="1"/>
</dbReference>
<comment type="function">
    <text evidence="1">Protease subunit of a proteasome-like degradation complex believed to be a general protein degrading machinery.</text>
</comment>
<comment type="catalytic activity">
    <reaction evidence="1">
        <text>ATP-dependent cleavage of peptide bonds with broad specificity.</text>
        <dbReference type="EC" id="3.4.25.2"/>
    </reaction>
</comment>
<comment type="activity regulation">
    <text evidence="1">Allosterically activated by HslU binding.</text>
</comment>
<comment type="subunit">
    <text evidence="1">A double ring-shaped homohexamer of HslV is capped on each side by a ring-shaped HslU homohexamer. The assembly of the HslU/HslV complex is dependent on binding of ATP.</text>
</comment>
<comment type="subcellular location">
    <subcellularLocation>
        <location evidence="1">Cytoplasm</location>
    </subcellularLocation>
</comment>
<comment type="similarity">
    <text evidence="1">Belongs to the peptidase T1B family. HslV subfamily.</text>
</comment>
<organism>
    <name type="scientific">Coxiella burnetii (strain RSA 331 / Henzerling II)</name>
    <dbReference type="NCBI Taxonomy" id="360115"/>
    <lineage>
        <taxon>Bacteria</taxon>
        <taxon>Pseudomonadati</taxon>
        <taxon>Pseudomonadota</taxon>
        <taxon>Gammaproteobacteria</taxon>
        <taxon>Legionellales</taxon>
        <taxon>Coxiellaceae</taxon>
        <taxon>Coxiella</taxon>
    </lineage>
</organism>
<keyword id="KW-0021">Allosteric enzyme</keyword>
<keyword id="KW-0963">Cytoplasm</keyword>
<keyword id="KW-0378">Hydrolase</keyword>
<keyword id="KW-0479">Metal-binding</keyword>
<keyword id="KW-0645">Protease</keyword>
<keyword id="KW-0915">Sodium</keyword>
<keyword id="KW-0888">Threonine protease</keyword>
<protein>
    <recommendedName>
        <fullName evidence="1">ATP-dependent protease subunit HslV</fullName>
        <ecNumber evidence="1">3.4.25.2</ecNumber>
    </recommendedName>
</protein>
<proteinExistence type="inferred from homology"/>
<name>HSLV_COXBR</name>
<feature type="chain" id="PRO_1000078419" description="ATP-dependent protease subunit HslV">
    <location>
        <begin position="1"/>
        <end position="181"/>
    </location>
</feature>
<feature type="active site" evidence="1">
    <location>
        <position position="7"/>
    </location>
</feature>
<feature type="binding site" evidence="1">
    <location>
        <position position="162"/>
    </location>
    <ligand>
        <name>Na(+)</name>
        <dbReference type="ChEBI" id="CHEBI:29101"/>
    </ligand>
</feature>
<feature type="binding site" evidence="1">
    <location>
        <position position="165"/>
    </location>
    <ligand>
        <name>Na(+)</name>
        <dbReference type="ChEBI" id="CHEBI:29101"/>
    </ligand>
</feature>
<feature type="binding site" evidence="1">
    <location>
        <position position="168"/>
    </location>
    <ligand>
        <name>Na(+)</name>
        <dbReference type="ChEBI" id="CHEBI:29101"/>
    </ligand>
</feature>